<keyword id="KW-0378">Hydrolase</keyword>
<keyword id="KW-0460">Magnesium</keyword>
<keyword id="KW-1185">Reference proteome</keyword>
<comment type="cofactor">
    <cofactor evidence="1">
        <name>Mg(2+)</name>
        <dbReference type="ChEBI" id="CHEBI:18420"/>
    </cofactor>
</comment>
<comment type="subunit">
    <text evidence="1">Monomer.</text>
</comment>
<comment type="similarity">
    <text evidence="3">Belongs to the Nudix hydrolase family. NudJ subfamily.</text>
</comment>
<organism>
    <name type="scientific">Escherichia coli O157:H7</name>
    <dbReference type="NCBI Taxonomy" id="83334"/>
    <lineage>
        <taxon>Bacteria</taxon>
        <taxon>Pseudomonadati</taxon>
        <taxon>Pseudomonadota</taxon>
        <taxon>Gammaproteobacteria</taxon>
        <taxon>Enterobacterales</taxon>
        <taxon>Enterobacteriaceae</taxon>
        <taxon>Escherichia</taxon>
    </lineage>
</organism>
<protein>
    <recommendedName>
        <fullName>Phosphatase NudJ</fullName>
        <ecNumber>3.6.1.-</ecNumber>
    </recommendedName>
</protein>
<evidence type="ECO:0000250" key="1"/>
<evidence type="ECO:0000255" key="2">
    <source>
        <dbReference type="PROSITE-ProRule" id="PRU00794"/>
    </source>
</evidence>
<evidence type="ECO:0000305" key="3"/>
<feature type="chain" id="PRO_0000057070" description="Phosphatase NudJ">
    <location>
        <begin position="1"/>
        <end position="153"/>
    </location>
</feature>
<feature type="domain" description="Nudix hydrolase" evidence="2">
    <location>
        <begin position="3"/>
        <end position="131"/>
    </location>
</feature>
<feature type="short sequence motif" description="Nudix box">
    <location>
        <begin position="36"/>
        <end position="57"/>
    </location>
</feature>
<proteinExistence type="inferred from homology"/>
<sequence>MFKPHVTVACVVHAEGKFLVVEETINGKALWNQPAGHLEADETLVEAAARELWEETGISAQPQHFIRMHQWIAPDKTPFLRFLFAIELEQICPTQPHDSDIDCCRWVSAEEILQASNLRSPLVAESIRCYQSGQRYPLEMIGDFNWPFTKGVI</sequence>
<name>NUDJ_ECO57</name>
<accession>P0AEI8</accession>
<accession>P75965</accession>
<gene>
    <name type="primary">nudJ</name>
    <name type="ordered locus">Z1863</name>
    <name type="ordered locus">ECs1606</name>
</gene>
<reference key="1">
    <citation type="journal article" date="2001" name="Nature">
        <title>Genome sequence of enterohaemorrhagic Escherichia coli O157:H7.</title>
        <authorList>
            <person name="Perna N.T."/>
            <person name="Plunkett G. III"/>
            <person name="Burland V."/>
            <person name="Mau B."/>
            <person name="Glasner J.D."/>
            <person name="Rose D.J."/>
            <person name="Mayhew G.F."/>
            <person name="Evans P.S."/>
            <person name="Gregor J."/>
            <person name="Kirkpatrick H.A."/>
            <person name="Posfai G."/>
            <person name="Hackett J."/>
            <person name="Klink S."/>
            <person name="Boutin A."/>
            <person name="Shao Y."/>
            <person name="Miller L."/>
            <person name="Grotbeck E.J."/>
            <person name="Davis N.W."/>
            <person name="Lim A."/>
            <person name="Dimalanta E.T."/>
            <person name="Potamousis K."/>
            <person name="Apodaca J."/>
            <person name="Anantharaman T.S."/>
            <person name="Lin J."/>
            <person name="Yen G."/>
            <person name="Schwartz D.C."/>
            <person name="Welch R.A."/>
            <person name="Blattner F.R."/>
        </authorList>
    </citation>
    <scope>NUCLEOTIDE SEQUENCE [LARGE SCALE GENOMIC DNA]</scope>
    <source>
        <strain>O157:H7 / EDL933 / ATCC 700927 / EHEC</strain>
    </source>
</reference>
<reference key="2">
    <citation type="journal article" date="2001" name="DNA Res.">
        <title>Complete genome sequence of enterohemorrhagic Escherichia coli O157:H7 and genomic comparison with a laboratory strain K-12.</title>
        <authorList>
            <person name="Hayashi T."/>
            <person name="Makino K."/>
            <person name="Ohnishi M."/>
            <person name="Kurokawa K."/>
            <person name="Ishii K."/>
            <person name="Yokoyama K."/>
            <person name="Han C.-G."/>
            <person name="Ohtsubo E."/>
            <person name="Nakayama K."/>
            <person name="Murata T."/>
            <person name="Tanaka M."/>
            <person name="Tobe T."/>
            <person name="Iida T."/>
            <person name="Takami H."/>
            <person name="Honda T."/>
            <person name="Sasakawa C."/>
            <person name="Ogasawara N."/>
            <person name="Yasunaga T."/>
            <person name="Kuhara S."/>
            <person name="Shiba T."/>
            <person name="Hattori M."/>
            <person name="Shinagawa H."/>
        </authorList>
    </citation>
    <scope>NUCLEOTIDE SEQUENCE [LARGE SCALE GENOMIC DNA]</scope>
    <source>
        <strain>O157:H7 / Sakai / RIMD 0509952 / EHEC</strain>
    </source>
</reference>
<dbReference type="EC" id="3.6.1.-"/>
<dbReference type="EMBL" id="AE005174">
    <property type="protein sequence ID" value="AAG55960.1"/>
    <property type="molecule type" value="Genomic_DNA"/>
</dbReference>
<dbReference type="EMBL" id="BA000007">
    <property type="protein sequence ID" value="BAB35029.1"/>
    <property type="molecule type" value="Genomic_DNA"/>
</dbReference>
<dbReference type="PIR" id="D85687">
    <property type="entry name" value="D85687"/>
</dbReference>
<dbReference type="PIR" id="F90829">
    <property type="entry name" value="F90829"/>
</dbReference>
<dbReference type="RefSeq" id="NP_309633.1">
    <property type="nucleotide sequence ID" value="NC_002695.1"/>
</dbReference>
<dbReference type="RefSeq" id="WP_000476093.1">
    <property type="nucleotide sequence ID" value="NZ_VOAI01000035.1"/>
</dbReference>
<dbReference type="SMR" id="P0AEI8"/>
<dbReference type="STRING" id="155864.Z1863"/>
<dbReference type="GeneID" id="75203720"/>
<dbReference type="GeneID" id="913284"/>
<dbReference type="KEGG" id="ece:Z1863"/>
<dbReference type="KEGG" id="ecs:ECs_1606"/>
<dbReference type="PATRIC" id="fig|386585.9.peg.1706"/>
<dbReference type="eggNOG" id="COG1051">
    <property type="taxonomic scope" value="Bacteria"/>
</dbReference>
<dbReference type="HOGENOM" id="CLU_037162_6_1_6"/>
<dbReference type="OMA" id="IVRTVWM"/>
<dbReference type="Proteomes" id="UP000000558">
    <property type="component" value="Chromosome"/>
</dbReference>
<dbReference type="Proteomes" id="UP000002519">
    <property type="component" value="Chromosome"/>
</dbReference>
<dbReference type="GO" id="GO:0017110">
    <property type="term" value="F:nucleoside diphosphate phosphatase activity"/>
    <property type="evidence" value="ECO:0007669"/>
    <property type="project" value="InterPro"/>
</dbReference>
<dbReference type="GO" id="GO:0017111">
    <property type="term" value="F:ribonucleoside triphosphate phosphatase activity"/>
    <property type="evidence" value="ECO:0007669"/>
    <property type="project" value="InterPro"/>
</dbReference>
<dbReference type="GO" id="GO:0004787">
    <property type="term" value="F:thiamine diphosphate phosphatase activity"/>
    <property type="evidence" value="ECO:0007669"/>
    <property type="project" value="InterPro"/>
</dbReference>
<dbReference type="CDD" id="cd03675">
    <property type="entry name" value="NUDIX_Hydrolase"/>
    <property type="match status" value="1"/>
</dbReference>
<dbReference type="FunFam" id="3.90.79.10:FF:000017">
    <property type="entry name" value="Phosphatase NudJ"/>
    <property type="match status" value="1"/>
</dbReference>
<dbReference type="Gene3D" id="3.90.79.10">
    <property type="entry name" value="Nucleoside Triphosphate Pyrophosphohydrolase"/>
    <property type="match status" value="1"/>
</dbReference>
<dbReference type="InterPro" id="IPR020476">
    <property type="entry name" value="Nudix_hydrolase"/>
</dbReference>
<dbReference type="InterPro" id="IPR015797">
    <property type="entry name" value="NUDIX_hydrolase-like_dom_sf"/>
</dbReference>
<dbReference type="InterPro" id="IPR020084">
    <property type="entry name" value="NUDIX_hydrolase_CS"/>
</dbReference>
<dbReference type="InterPro" id="IPR000086">
    <property type="entry name" value="NUDIX_hydrolase_dom"/>
</dbReference>
<dbReference type="InterPro" id="IPR033713">
    <property type="entry name" value="NudJ"/>
</dbReference>
<dbReference type="PANTHER" id="PTHR43222">
    <property type="entry name" value="NUDIX HYDROLASE 23"/>
    <property type="match status" value="1"/>
</dbReference>
<dbReference type="PANTHER" id="PTHR43222:SF11">
    <property type="entry name" value="PHOSPHATASE NUDJ"/>
    <property type="match status" value="1"/>
</dbReference>
<dbReference type="Pfam" id="PF00293">
    <property type="entry name" value="NUDIX"/>
    <property type="match status" value="1"/>
</dbReference>
<dbReference type="PRINTS" id="PR00502">
    <property type="entry name" value="NUDIXFAMILY"/>
</dbReference>
<dbReference type="SUPFAM" id="SSF55811">
    <property type="entry name" value="Nudix"/>
    <property type="match status" value="1"/>
</dbReference>
<dbReference type="PROSITE" id="PS51462">
    <property type="entry name" value="NUDIX"/>
    <property type="match status" value="1"/>
</dbReference>
<dbReference type="PROSITE" id="PS00893">
    <property type="entry name" value="NUDIX_BOX"/>
    <property type="match status" value="1"/>
</dbReference>